<proteinExistence type="inferred from homology"/>
<protein>
    <recommendedName>
        <fullName evidence="1">Asparagine--tRNA ligase</fullName>
        <ecNumber evidence="1">6.1.1.22</ecNumber>
    </recommendedName>
    <alternativeName>
        <fullName evidence="1">Asparaginyl-tRNA synthetase</fullName>
        <shortName evidence="1">AsnRS</shortName>
    </alternativeName>
</protein>
<dbReference type="EC" id="6.1.1.22" evidence="1"/>
<dbReference type="EMBL" id="CP000563">
    <property type="protein sequence ID" value="ABN61420.1"/>
    <property type="molecule type" value="Genomic_DNA"/>
</dbReference>
<dbReference type="RefSeq" id="WP_006081411.1">
    <property type="nucleotide sequence ID" value="NC_009052.1"/>
</dbReference>
<dbReference type="SMR" id="A3D3V7"/>
<dbReference type="STRING" id="325240.Sbal_1914"/>
<dbReference type="KEGG" id="sbl:Sbal_1914"/>
<dbReference type="HOGENOM" id="CLU_004553_2_0_6"/>
<dbReference type="OrthoDB" id="9762036at2"/>
<dbReference type="Proteomes" id="UP000001557">
    <property type="component" value="Chromosome"/>
</dbReference>
<dbReference type="GO" id="GO:0005737">
    <property type="term" value="C:cytoplasm"/>
    <property type="evidence" value="ECO:0007669"/>
    <property type="project" value="UniProtKB-SubCell"/>
</dbReference>
<dbReference type="GO" id="GO:0004816">
    <property type="term" value="F:asparagine-tRNA ligase activity"/>
    <property type="evidence" value="ECO:0007669"/>
    <property type="project" value="UniProtKB-UniRule"/>
</dbReference>
<dbReference type="GO" id="GO:0005524">
    <property type="term" value="F:ATP binding"/>
    <property type="evidence" value="ECO:0007669"/>
    <property type="project" value="UniProtKB-UniRule"/>
</dbReference>
<dbReference type="GO" id="GO:0003676">
    <property type="term" value="F:nucleic acid binding"/>
    <property type="evidence" value="ECO:0007669"/>
    <property type="project" value="InterPro"/>
</dbReference>
<dbReference type="GO" id="GO:0006421">
    <property type="term" value="P:asparaginyl-tRNA aminoacylation"/>
    <property type="evidence" value="ECO:0007669"/>
    <property type="project" value="UniProtKB-UniRule"/>
</dbReference>
<dbReference type="CDD" id="cd00776">
    <property type="entry name" value="AsxRS_core"/>
    <property type="match status" value="1"/>
</dbReference>
<dbReference type="CDD" id="cd04318">
    <property type="entry name" value="EcAsnRS_like_N"/>
    <property type="match status" value="1"/>
</dbReference>
<dbReference type="FunFam" id="3.30.930.10:FF:000016">
    <property type="entry name" value="Asparagine--tRNA ligase"/>
    <property type="match status" value="1"/>
</dbReference>
<dbReference type="Gene3D" id="3.30.930.10">
    <property type="entry name" value="Bira Bifunctional Protein, Domain 2"/>
    <property type="match status" value="1"/>
</dbReference>
<dbReference type="Gene3D" id="2.40.50.140">
    <property type="entry name" value="Nucleic acid-binding proteins"/>
    <property type="match status" value="1"/>
</dbReference>
<dbReference type="HAMAP" id="MF_00534">
    <property type="entry name" value="Asn_tRNA_synth"/>
    <property type="match status" value="1"/>
</dbReference>
<dbReference type="InterPro" id="IPR004364">
    <property type="entry name" value="Aa-tRNA-synt_II"/>
</dbReference>
<dbReference type="InterPro" id="IPR006195">
    <property type="entry name" value="aa-tRNA-synth_II"/>
</dbReference>
<dbReference type="InterPro" id="IPR045864">
    <property type="entry name" value="aa-tRNA-synth_II/BPL/LPL"/>
</dbReference>
<dbReference type="InterPro" id="IPR004522">
    <property type="entry name" value="Asn-tRNA-ligase"/>
</dbReference>
<dbReference type="InterPro" id="IPR002312">
    <property type="entry name" value="Asp/Asn-tRNA-synth_IIb"/>
</dbReference>
<dbReference type="InterPro" id="IPR012340">
    <property type="entry name" value="NA-bd_OB-fold"/>
</dbReference>
<dbReference type="InterPro" id="IPR004365">
    <property type="entry name" value="NA-bd_OB_tRNA"/>
</dbReference>
<dbReference type="NCBIfam" id="TIGR00457">
    <property type="entry name" value="asnS"/>
    <property type="match status" value="1"/>
</dbReference>
<dbReference type="NCBIfam" id="NF003037">
    <property type="entry name" value="PRK03932.1"/>
    <property type="match status" value="1"/>
</dbReference>
<dbReference type="PANTHER" id="PTHR22594:SF34">
    <property type="entry name" value="ASPARAGINE--TRNA LIGASE, MITOCHONDRIAL-RELATED"/>
    <property type="match status" value="1"/>
</dbReference>
<dbReference type="PANTHER" id="PTHR22594">
    <property type="entry name" value="ASPARTYL/LYSYL-TRNA SYNTHETASE"/>
    <property type="match status" value="1"/>
</dbReference>
<dbReference type="Pfam" id="PF00152">
    <property type="entry name" value="tRNA-synt_2"/>
    <property type="match status" value="1"/>
</dbReference>
<dbReference type="Pfam" id="PF01336">
    <property type="entry name" value="tRNA_anti-codon"/>
    <property type="match status" value="1"/>
</dbReference>
<dbReference type="PRINTS" id="PR01042">
    <property type="entry name" value="TRNASYNTHASP"/>
</dbReference>
<dbReference type="SUPFAM" id="SSF55681">
    <property type="entry name" value="Class II aaRS and biotin synthetases"/>
    <property type="match status" value="1"/>
</dbReference>
<dbReference type="SUPFAM" id="SSF50249">
    <property type="entry name" value="Nucleic acid-binding proteins"/>
    <property type="match status" value="1"/>
</dbReference>
<dbReference type="PROSITE" id="PS50862">
    <property type="entry name" value="AA_TRNA_LIGASE_II"/>
    <property type="match status" value="1"/>
</dbReference>
<feature type="chain" id="PRO_1000051420" description="Asparagine--tRNA ligase">
    <location>
        <begin position="1"/>
        <end position="466"/>
    </location>
</feature>
<sequence length="466" mass="52151">MSIASVASVFKGEHAVGSKVTVRGWVRTRRDSKAGISFLAVYDGSCFNPIQGVVPNSLDNYDNEVLKLTAGCSVVMTGDVVESPGAGQAFELQVTDIEVAGWVDDPDTYPMAAKRHSIEHLRELAHLRPRTNIIGAVARVRNCLSQAIHRFYHEEGFIWVSTPLITASDCEGAGEMFRVSTLDMENLPRTDAGKVDYDKDFFGKEAFLTVSGQLNAETYACALSKVYTFGPTFRAENSNTSRHLAEFWMVEPEVAFANLNDIAGLAEAMLKYAFNAVLTERMDDLTFFAQHVDKTVIDRLQSFVSSDFAQVDYTDAVEILQNCGRTFEFPVSWGIDLSSEHERYLAEEHFKAPVVVKNYPKDIKAFYMRLNDDGKTVAAMDVLAPGIGEIIGGSQREERLDVLDMRLAEMDLNQEDYWWYRDMRRYGTVPHAGFGLGFERLVSYVTGVNNIRDVIPFPRAPRTANF</sequence>
<gene>
    <name evidence="1" type="primary">asnS</name>
    <name type="ordered locus">Sbal_1914</name>
</gene>
<reference key="1">
    <citation type="submission" date="2007-02" db="EMBL/GenBank/DDBJ databases">
        <title>Complete sequence of chromosome of Shewanella baltica OS155.</title>
        <authorList>
            <consortium name="US DOE Joint Genome Institute"/>
            <person name="Copeland A."/>
            <person name="Lucas S."/>
            <person name="Lapidus A."/>
            <person name="Barry K."/>
            <person name="Detter J.C."/>
            <person name="Glavina del Rio T."/>
            <person name="Hammon N."/>
            <person name="Israni S."/>
            <person name="Dalin E."/>
            <person name="Tice H."/>
            <person name="Pitluck S."/>
            <person name="Sims D.R."/>
            <person name="Brettin T."/>
            <person name="Bruce D."/>
            <person name="Han C."/>
            <person name="Tapia R."/>
            <person name="Brainard J."/>
            <person name="Schmutz J."/>
            <person name="Larimer F."/>
            <person name="Land M."/>
            <person name="Hauser L."/>
            <person name="Kyrpides N."/>
            <person name="Mikhailova N."/>
            <person name="Brettar I."/>
            <person name="Klappenbach J."/>
            <person name="Konstantinidis K."/>
            <person name="Rodrigues J."/>
            <person name="Tiedje J."/>
            <person name="Richardson P."/>
        </authorList>
    </citation>
    <scope>NUCLEOTIDE SEQUENCE [LARGE SCALE GENOMIC DNA]</scope>
    <source>
        <strain>OS155 / ATCC BAA-1091</strain>
    </source>
</reference>
<comment type="catalytic activity">
    <reaction evidence="1">
        <text>tRNA(Asn) + L-asparagine + ATP = L-asparaginyl-tRNA(Asn) + AMP + diphosphate + H(+)</text>
        <dbReference type="Rhea" id="RHEA:11180"/>
        <dbReference type="Rhea" id="RHEA-COMP:9659"/>
        <dbReference type="Rhea" id="RHEA-COMP:9674"/>
        <dbReference type="ChEBI" id="CHEBI:15378"/>
        <dbReference type="ChEBI" id="CHEBI:30616"/>
        <dbReference type="ChEBI" id="CHEBI:33019"/>
        <dbReference type="ChEBI" id="CHEBI:58048"/>
        <dbReference type="ChEBI" id="CHEBI:78442"/>
        <dbReference type="ChEBI" id="CHEBI:78515"/>
        <dbReference type="ChEBI" id="CHEBI:456215"/>
        <dbReference type="EC" id="6.1.1.22"/>
    </reaction>
</comment>
<comment type="subunit">
    <text evidence="1">Homodimer.</text>
</comment>
<comment type="subcellular location">
    <subcellularLocation>
        <location evidence="1">Cytoplasm</location>
    </subcellularLocation>
</comment>
<comment type="similarity">
    <text evidence="1">Belongs to the class-II aminoacyl-tRNA synthetase family.</text>
</comment>
<organism>
    <name type="scientific">Shewanella baltica (strain OS155 / ATCC BAA-1091)</name>
    <dbReference type="NCBI Taxonomy" id="325240"/>
    <lineage>
        <taxon>Bacteria</taxon>
        <taxon>Pseudomonadati</taxon>
        <taxon>Pseudomonadota</taxon>
        <taxon>Gammaproteobacteria</taxon>
        <taxon>Alteromonadales</taxon>
        <taxon>Shewanellaceae</taxon>
        <taxon>Shewanella</taxon>
    </lineage>
</organism>
<accession>A3D3V7</accession>
<keyword id="KW-0030">Aminoacyl-tRNA synthetase</keyword>
<keyword id="KW-0067">ATP-binding</keyword>
<keyword id="KW-0963">Cytoplasm</keyword>
<keyword id="KW-0436">Ligase</keyword>
<keyword id="KW-0547">Nucleotide-binding</keyword>
<keyword id="KW-0648">Protein biosynthesis</keyword>
<keyword id="KW-1185">Reference proteome</keyword>
<evidence type="ECO:0000255" key="1">
    <source>
        <dbReference type="HAMAP-Rule" id="MF_00534"/>
    </source>
</evidence>
<name>SYN_SHEB5</name>